<feature type="chain" id="PRO_1000165435" description="Small ribosomal subunit protein uS4">
    <location>
        <begin position="1"/>
        <end position="206"/>
    </location>
</feature>
<feature type="domain" description="S4 RNA-binding" evidence="1">
    <location>
        <begin position="96"/>
        <end position="158"/>
    </location>
</feature>
<dbReference type="EMBL" id="CP001233">
    <property type="protein sequence ID" value="ACP06789.1"/>
    <property type="molecule type" value="Genomic_DNA"/>
</dbReference>
<dbReference type="RefSeq" id="WP_000135216.1">
    <property type="nucleotide sequence ID" value="NC_012578.1"/>
</dbReference>
<dbReference type="SMR" id="C3LRN4"/>
<dbReference type="GeneID" id="88785131"/>
<dbReference type="KEGG" id="vcm:VCM66_2492"/>
<dbReference type="HOGENOM" id="CLU_092403_0_2_6"/>
<dbReference type="Proteomes" id="UP000001217">
    <property type="component" value="Chromosome I"/>
</dbReference>
<dbReference type="GO" id="GO:0015935">
    <property type="term" value="C:small ribosomal subunit"/>
    <property type="evidence" value="ECO:0007669"/>
    <property type="project" value="InterPro"/>
</dbReference>
<dbReference type="GO" id="GO:0019843">
    <property type="term" value="F:rRNA binding"/>
    <property type="evidence" value="ECO:0007669"/>
    <property type="project" value="UniProtKB-UniRule"/>
</dbReference>
<dbReference type="GO" id="GO:0003735">
    <property type="term" value="F:structural constituent of ribosome"/>
    <property type="evidence" value="ECO:0007669"/>
    <property type="project" value="InterPro"/>
</dbReference>
<dbReference type="GO" id="GO:0042274">
    <property type="term" value="P:ribosomal small subunit biogenesis"/>
    <property type="evidence" value="ECO:0007669"/>
    <property type="project" value="TreeGrafter"/>
</dbReference>
<dbReference type="GO" id="GO:0006412">
    <property type="term" value="P:translation"/>
    <property type="evidence" value="ECO:0007669"/>
    <property type="project" value="UniProtKB-UniRule"/>
</dbReference>
<dbReference type="CDD" id="cd00165">
    <property type="entry name" value="S4"/>
    <property type="match status" value="1"/>
</dbReference>
<dbReference type="FunFam" id="1.10.1050.10:FF:000001">
    <property type="entry name" value="30S ribosomal protein S4"/>
    <property type="match status" value="1"/>
</dbReference>
<dbReference type="FunFam" id="3.10.290.10:FF:000001">
    <property type="entry name" value="30S ribosomal protein S4"/>
    <property type="match status" value="1"/>
</dbReference>
<dbReference type="Gene3D" id="1.10.1050.10">
    <property type="entry name" value="Ribosomal Protein S4 Delta 41, Chain A, domain 1"/>
    <property type="match status" value="1"/>
</dbReference>
<dbReference type="Gene3D" id="3.10.290.10">
    <property type="entry name" value="RNA-binding S4 domain"/>
    <property type="match status" value="1"/>
</dbReference>
<dbReference type="HAMAP" id="MF_01306_B">
    <property type="entry name" value="Ribosomal_uS4_B"/>
    <property type="match status" value="1"/>
</dbReference>
<dbReference type="InterPro" id="IPR022801">
    <property type="entry name" value="Ribosomal_uS4"/>
</dbReference>
<dbReference type="InterPro" id="IPR005709">
    <property type="entry name" value="Ribosomal_uS4_bac-type"/>
</dbReference>
<dbReference type="InterPro" id="IPR018079">
    <property type="entry name" value="Ribosomal_uS4_CS"/>
</dbReference>
<dbReference type="InterPro" id="IPR001912">
    <property type="entry name" value="Ribosomal_uS4_N"/>
</dbReference>
<dbReference type="InterPro" id="IPR002942">
    <property type="entry name" value="S4_RNA-bd"/>
</dbReference>
<dbReference type="InterPro" id="IPR036986">
    <property type="entry name" value="S4_RNA-bd_sf"/>
</dbReference>
<dbReference type="NCBIfam" id="NF003717">
    <property type="entry name" value="PRK05327.1"/>
    <property type="match status" value="1"/>
</dbReference>
<dbReference type="NCBIfam" id="TIGR01017">
    <property type="entry name" value="rpsD_bact"/>
    <property type="match status" value="1"/>
</dbReference>
<dbReference type="PANTHER" id="PTHR11831">
    <property type="entry name" value="30S 40S RIBOSOMAL PROTEIN"/>
    <property type="match status" value="1"/>
</dbReference>
<dbReference type="PANTHER" id="PTHR11831:SF4">
    <property type="entry name" value="SMALL RIBOSOMAL SUBUNIT PROTEIN US4M"/>
    <property type="match status" value="1"/>
</dbReference>
<dbReference type="Pfam" id="PF00163">
    <property type="entry name" value="Ribosomal_S4"/>
    <property type="match status" value="1"/>
</dbReference>
<dbReference type="Pfam" id="PF01479">
    <property type="entry name" value="S4"/>
    <property type="match status" value="1"/>
</dbReference>
<dbReference type="SMART" id="SM01390">
    <property type="entry name" value="Ribosomal_S4"/>
    <property type="match status" value="1"/>
</dbReference>
<dbReference type="SMART" id="SM00363">
    <property type="entry name" value="S4"/>
    <property type="match status" value="1"/>
</dbReference>
<dbReference type="SUPFAM" id="SSF55174">
    <property type="entry name" value="Alpha-L RNA-binding motif"/>
    <property type="match status" value="1"/>
</dbReference>
<dbReference type="PROSITE" id="PS00632">
    <property type="entry name" value="RIBOSOMAL_S4"/>
    <property type="match status" value="1"/>
</dbReference>
<dbReference type="PROSITE" id="PS50889">
    <property type="entry name" value="S4"/>
    <property type="match status" value="1"/>
</dbReference>
<name>RS4_VIBCM</name>
<keyword id="KW-0687">Ribonucleoprotein</keyword>
<keyword id="KW-0689">Ribosomal protein</keyword>
<keyword id="KW-0694">RNA-binding</keyword>
<keyword id="KW-0699">rRNA-binding</keyword>
<organism>
    <name type="scientific">Vibrio cholerae serotype O1 (strain M66-2)</name>
    <dbReference type="NCBI Taxonomy" id="579112"/>
    <lineage>
        <taxon>Bacteria</taxon>
        <taxon>Pseudomonadati</taxon>
        <taxon>Pseudomonadota</taxon>
        <taxon>Gammaproteobacteria</taxon>
        <taxon>Vibrionales</taxon>
        <taxon>Vibrionaceae</taxon>
        <taxon>Vibrio</taxon>
    </lineage>
</organism>
<gene>
    <name evidence="1" type="primary">rpsD</name>
    <name type="ordered locus">VCM66_2492</name>
</gene>
<sequence length="206" mass="23359">MARYLGPKLKLSRREGTDLFLKSGVRAIDTKCKIDNAPGVHGARRGRLSEYGVQLREKQKVRRIYGVLEKQFRNYYKEAARLKGNTGENLLQLLEGRLDNVVYRMGFGATRAEARQLVSHKAILVNGKVVNVPSFNVAANDVVAVREKAKKQSRIKAALEVAEQREKPTWIEVDVNTMEGTFKRMPERSDLSADINEQLIVELYSK</sequence>
<accession>C3LRN4</accession>
<proteinExistence type="inferred from homology"/>
<protein>
    <recommendedName>
        <fullName evidence="1">Small ribosomal subunit protein uS4</fullName>
    </recommendedName>
    <alternativeName>
        <fullName evidence="2">30S ribosomal protein S4</fullName>
    </alternativeName>
</protein>
<comment type="function">
    <text evidence="1">One of the primary rRNA binding proteins, it binds directly to 16S rRNA where it nucleates assembly of the body of the 30S subunit.</text>
</comment>
<comment type="function">
    <text evidence="1">With S5 and S12 plays an important role in translational accuracy.</text>
</comment>
<comment type="subunit">
    <text evidence="1">Part of the 30S ribosomal subunit. Contacts protein S5. The interaction surface between S4 and S5 is involved in control of translational fidelity.</text>
</comment>
<comment type="similarity">
    <text evidence="1">Belongs to the universal ribosomal protein uS4 family.</text>
</comment>
<evidence type="ECO:0000255" key="1">
    <source>
        <dbReference type="HAMAP-Rule" id="MF_01306"/>
    </source>
</evidence>
<evidence type="ECO:0000305" key="2"/>
<reference key="1">
    <citation type="journal article" date="2008" name="PLoS ONE">
        <title>A recalibrated molecular clock and independent origins for the cholera pandemic clones.</title>
        <authorList>
            <person name="Feng L."/>
            <person name="Reeves P.R."/>
            <person name="Lan R."/>
            <person name="Ren Y."/>
            <person name="Gao C."/>
            <person name="Zhou Z."/>
            <person name="Ren Y."/>
            <person name="Cheng J."/>
            <person name="Wang W."/>
            <person name="Wang J."/>
            <person name="Qian W."/>
            <person name="Li D."/>
            <person name="Wang L."/>
        </authorList>
    </citation>
    <scope>NUCLEOTIDE SEQUENCE [LARGE SCALE GENOMIC DNA]</scope>
    <source>
        <strain>M66-2</strain>
    </source>
</reference>